<organismHost>
    <name type="scientific">Enterobacteriaceae</name>
    <dbReference type="NCBI Taxonomy" id="543"/>
</organismHost>
<organism>
    <name type="scientific">Escherichia phage Mu</name>
    <name type="common">Bacteriophage Mu</name>
    <dbReference type="NCBI Taxonomy" id="2681603"/>
    <lineage>
        <taxon>Viruses</taxon>
        <taxon>Duplodnaviria</taxon>
        <taxon>Heunggongvirae</taxon>
        <taxon>Uroviricota</taxon>
        <taxon>Caudoviricetes</taxon>
        <taxon>Muvirus</taxon>
        <taxon>Muvirus mu</taxon>
    </lineage>
</organism>
<feature type="chain" id="PRO_0000077811" description="GemA protein">
    <location>
        <begin position="1"/>
        <end position="183"/>
    </location>
</feature>
<gene>
    <name type="primary">gemA</name>
    <name type="ordered locus">Mup16</name>
</gene>
<comment type="function">
    <text evidence="1">Early protein responsible for decreasing host DNA gyrase activity. Promotes DNA relaxation of bacterial host genome. Modulates the expression of various host genes probably controlled by supercoiling of their promoters. Host genes affected include DNA replication and cell division determinants.</text>
</comment>
<comment type="subunit">
    <text evidence="1">Homodimer.</text>
</comment>
<comment type="subcellular location">
    <subcellularLocation>
        <location evidence="2">Host cytoplasm</location>
    </subcellularLocation>
</comment>
<comment type="induction">
    <text evidence="3">This protein is constitively expressed from the Pgem promoter unlike most other early proteins which are expressed under the control of the Pe promoter. Its expression seems to escape repression by repressor protein c and thus occurs throughout latency (Probable).</text>
</comment>
<comment type="similarity">
    <text evidence="2">Belongs to the mulikevirus gemA protein family.</text>
</comment>
<comment type="sequence caution" evidence="2">
    <conflict type="erroneous initiation">
        <sequence resource="EMBL-CDS" id="AAA32406"/>
    </conflict>
    <text>Extended N-terminus.</text>
</comment>
<proteinExistence type="evidence at protein level"/>
<evidence type="ECO:0000269" key="1">
    <source>
    </source>
</evidence>
<evidence type="ECO:0000305" key="2"/>
<evidence type="ECO:0000305" key="3">
    <source>
    </source>
</evidence>
<protein>
    <recommendedName>
        <fullName>GemA protein</fullName>
    </recommendedName>
    <alternativeName>
        <fullName>Gene product 16</fullName>
        <shortName>gp16</shortName>
    </alternativeName>
</protein>
<sequence length="183" mass="21089">MSRTSLIKLIHVARRELQLDDDTYRAFLMQKTGKISCRELTVTQLEQVLGAMKERGFKKQNKYPRRRFKGHVTPREKVYKIWQQMAEDGFITDGGDVALDKYVQRLTAKRNGGQGVSTLAWCHGDTLLTVLETLKQWHIRCIREAFSRHGLPLPVSPSGRELRGYDAMTAAYAHARKTRRMAQ</sequence>
<accession>Q38494</accession>
<accession>Q9T1X3</accession>
<name>GEMA_BPMU</name>
<reference key="1">
    <citation type="book" date="1987" name="Phage Mu">
        <title>Sequence of the left end of Mu.</title>
        <editorList>
            <person name="Symonds N."/>
            <person name="Toussaint A."/>
            <person name="van de Putte P."/>
            <person name="Howe M.M."/>
        </editorList>
        <authorList>
            <person name="Priess H."/>
            <person name="Brauer B."/>
            <person name="Schmidt C."/>
            <person name="Kamp D."/>
        </authorList>
    </citation>
    <scope>NUCLEOTIDE SEQUENCE [GENOMIC DNA]</scope>
</reference>
<reference key="2">
    <citation type="journal article" date="2002" name="J. Mol. Biol.">
        <title>Bacteriophage Mu genome sequence: analysis and comparison with Mu-like prophages in Haemophilus, Neisseria and Deinococcus.</title>
        <authorList>
            <person name="Morgan G.J."/>
            <person name="Hatfull G.F."/>
            <person name="Casjens S."/>
            <person name="Hendrix R.W."/>
        </authorList>
    </citation>
    <scope>NUCLEOTIDE SEQUENCE [LARGE SCALE GENOMIC DNA]</scope>
</reference>
<reference key="3">
    <citation type="journal article" date="1992" name="Res. Microbiol.">
        <title>A case of lysogenic conversion: modification of cell phenotype by constitutive expression of the Mu gem operon.</title>
        <authorList>
            <person name="Paolozzi L."/>
            <person name="Ghelardini P."/>
        </authorList>
    </citation>
    <scope>INDUCTION</scope>
</reference>
<reference key="4">
    <citation type="journal article" date="1994" name="Genetica">
        <title>The Mu gem operon: its role in gene expression, recombination and cell cycle.</title>
        <authorList>
            <person name="Ghelardini P."/>
            <person name="La Valle R."/>
            <person name="Paolozzi L."/>
        </authorList>
    </citation>
    <scope>REVIEW</scope>
</reference>
<reference key="5">
    <citation type="journal article" date="2001" name="Biochimie">
        <title>The GemA protein of phage Mu and the GyrB gyrase subunit of Escherichia coli: the search for targets and interactions leading to the reversion of Mu-induced mutations.</title>
        <authorList>
            <person name="Abbes C."/>
            <person name="Joseleau-Petit D."/>
            <person name="Liebart J.C."/>
            <person name="D'Ari R."/>
            <person name="Sezonov G."/>
        </authorList>
    </citation>
    <scope>FUNCTION</scope>
    <scope>SUBUNIT</scope>
</reference>
<dbReference type="EMBL" id="M64097">
    <property type="protein sequence ID" value="AAA32406.1"/>
    <property type="status" value="ALT_INIT"/>
    <property type="molecule type" value="Genomic_DNA"/>
</dbReference>
<dbReference type="EMBL" id="AF083977">
    <property type="protein sequence ID" value="AAF01093.1"/>
    <property type="molecule type" value="Genomic_DNA"/>
</dbReference>
<dbReference type="RefSeq" id="NP_050620.1">
    <property type="nucleotide sequence ID" value="NC_000929.1"/>
</dbReference>
<dbReference type="SMR" id="Q38494"/>
<dbReference type="GeneID" id="2636256"/>
<dbReference type="KEGG" id="vg:2636256"/>
<dbReference type="Proteomes" id="UP000002611">
    <property type="component" value="Genome"/>
</dbReference>
<dbReference type="Proteomes" id="UP000401936">
    <property type="component" value="Segment"/>
</dbReference>
<dbReference type="GO" id="GO:0030430">
    <property type="term" value="C:host cell cytoplasm"/>
    <property type="evidence" value="ECO:0007669"/>
    <property type="project" value="UniProtKB-SubCell"/>
</dbReference>
<dbReference type="GO" id="GO:0044071">
    <property type="term" value="P:symbiont-mediated perturbation of host cell cycle progression"/>
    <property type="evidence" value="ECO:0007669"/>
    <property type="project" value="UniProtKB-KW"/>
</dbReference>
<dbReference type="InterPro" id="IPR009363">
    <property type="entry name" value="Phage_Mu_Gp16"/>
</dbReference>
<dbReference type="Pfam" id="PF06252">
    <property type="entry name" value="GemA"/>
    <property type="match status" value="1"/>
</dbReference>
<keyword id="KW-0244">Early protein</keyword>
<keyword id="KW-1035">Host cytoplasm</keyword>
<keyword id="KW-0945">Host-virus interaction</keyword>
<keyword id="KW-1121">Modulation of host cell cycle by virus</keyword>
<keyword id="KW-1185">Reference proteome</keyword>